<organism>
    <name type="scientific">Escherichia coli O157:H7</name>
    <dbReference type="NCBI Taxonomy" id="83334"/>
    <lineage>
        <taxon>Bacteria</taxon>
        <taxon>Pseudomonadati</taxon>
        <taxon>Pseudomonadota</taxon>
        <taxon>Gammaproteobacteria</taxon>
        <taxon>Enterobacterales</taxon>
        <taxon>Enterobacteriaceae</taxon>
        <taxon>Escherichia</taxon>
    </lineage>
</organism>
<gene>
    <name type="primary">ugpE</name>
    <name type="ordered locus">Z4819</name>
    <name type="ordered locus">ECs4297</name>
</gene>
<accession>Q8X4P0</accession>
<accession>Q7AA81</accession>
<feature type="chain" id="PRO_0000292675" description="sn-glycerol-3-phosphate transport system permease protein UgpE">
    <location>
        <begin position="1"/>
        <end position="281"/>
    </location>
</feature>
<feature type="transmembrane region" description="Helical" evidence="3">
    <location>
        <begin position="16"/>
        <end position="36"/>
    </location>
</feature>
<feature type="transmembrane region" description="Helical" evidence="3">
    <location>
        <begin position="85"/>
        <end position="105"/>
    </location>
</feature>
<feature type="transmembrane region" description="Helical" evidence="3">
    <location>
        <begin position="113"/>
        <end position="133"/>
    </location>
</feature>
<feature type="transmembrane region" description="Helical" evidence="3">
    <location>
        <begin position="142"/>
        <end position="162"/>
    </location>
</feature>
<feature type="transmembrane region" description="Helical" evidence="3">
    <location>
        <begin position="202"/>
        <end position="222"/>
    </location>
</feature>
<feature type="transmembrane region" description="Helical" evidence="3">
    <location>
        <begin position="247"/>
        <end position="267"/>
    </location>
</feature>
<feature type="domain" description="ABC transmembrane type-1" evidence="3">
    <location>
        <begin position="77"/>
        <end position="268"/>
    </location>
</feature>
<protein>
    <recommendedName>
        <fullName evidence="1">sn-glycerol-3-phosphate transport system permease protein UgpE</fullName>
    </recommendedName>
</protein>
<evidence type="ECO:0000250" key="1">
    <source>
        <dbReference type="UniProtKB" id="P10906"/>
    </source>
</evidence>
<evidence type="ECO:0000255" key="2"/>
<evidence type="ECO:0000255" key="3">
    <source>
        <dbReference type="PROSITE-ProRule" id="PRU00441"/>
    </source>
</evidence>
<evidence type="ECO:0000305" key="4"/>
<comment type="function">
    <text evidence="1">Part of the ABC transporter complex UgpBAEC involved in sn-glycerol-3-phosphate (G3P) import. Probably responsible for the translocation of the substrate across the membrane.</text>
</comment>
<comment type="subunit">
    <text evidence="1">The complex is composed of two ATP-binding proteins (UgpC), two transmembrane proteins (UgpA and UgpE) and a solute-binding protein (UgpB).</text>
</comment>
<comment type="subcellular location">
    <subcellularLocation>
        <location evidence="1">Cell inner membrane</location>
        <topology evidence="2">Multi-pass membrane protein</topology>
    </subcellularLocation>
</comment>
<comment type="similarity">
    <text evidence="4">Belongs to the binding-protein-dependent transport system permease family. UgpAE subfamily.</text>
</comment>
<reference key="1">
    <citation type="journal article" date="2001" name="Nature">
        <title>Genome sequence of enterohaemorrhagic Escherichia coli O157:H7.</title>
        <authorList>
            <person name="Perna N.T."/>
            <person name="Plunkett G. III"/>
            <person name="Burland V."/>
            <person name="Mau B."/>
            <person name="Glasner J.D."/>
            <person name="Rose D.J."/>
            <person name="Mayhew G.F."/>
            <person name="Evans P.S."/>
            <person name="Gregor J."/>
            <person name="Kirkpatrick H.A."/>
            <person name="Posfai G."/>
            <person name="Hackett J."/>
            <person name="Klink S."/>
            <person name="Boutin A."/>
            <person name="Shao Y."/>
            <person name="Miller L."/>
            <person name="Grotbeck E.J."/>
            <person name="Davis N.W."/>
            <person name="Lim A."/>
            <person name="Dimalanta E.T."/>
            <person name="Potamousis K."/>
            <person name="Apodaca J."/>
            <person name="Anantharaman T.S."/>
            <person name="Lin J."/>
            <person name="Yen G."/>
            <person name="Schwartz D.C."/>
            <person name="Welch R.A."/>
            <person name="Blattner F.R."/>
        </authorList>
    </citation>
    <scope>NUCLEOTIDE SEQUENCE [LARGE SCALE GENOMIC DNA]</scope>
    <source>
        <strain>O157:H7 / EDL933 / ATCC 700927 / EHEC</strain>
    </source>
</reference>
<reference key="2">
    <citation type="journal article" date="2001" name="DNA Res.">
        <title>Complete genome sequence of enterohemorrhagic Escherichia coli O157:H7 and genomic comparison with a laboratory strain K-12.</title>
        <authorList>
            <person name="Hayashi T."/>
            <person name="Makino K."/>
            <person name="Ohnishi M."/>
            <person name="Kurokawa K."/>
            <person name="Ishii K."/>
            <person name="Yokoyama K."/>
            <person name="Han C.-G."/>
            <person name="Ohtsubo E."/>
            <person name="Nakayama K."/>
            <person name="Murata T."/>
            <person name="Tanaka M."/>
            <person name="Tobe T."/>
            <person name="Iida T."/>
            <person name="Takami H."/>
            <person name="Honda T."/>
            <person name="Sasakawa C."/>
            <person name="Ogasawara N."/>
            <person name="Yasunaga T."/>
            <person name="Kuhara S."/>
            <person name="Shiba T."/>
            <person name="Hattori M."/>
            <person name="Shinagawa H."/>
        </authorList>
    </citation>
    <scope>NUCLEOTIDE SEQUENCE [LARGE SCALE GENOMIC DNA]</scope>
    <source>
        <strain>O157:H7 / Sakai / RIMD 0509952 / EHEC</strain>
    </source>
</reference>
<keyword id="KW-0997">Cell inner membrane</keyword>
<keyword id="KW-1003">Cell membrane</keyword>
<keyword id="KW-0472">Membrane</keyword>
<keyword id="KW-1185">Reference proteome</keyword>
<keyword id="KW-0812">Transmembrane</keyword>
<keyword id="KW-1133">Transmembrane helix</keyword>
<keyword id="KW-0813">Transport</keyword>
<dbReference type="EMBL" id="AE005174">
    <property type="protein sequence ID" value="AAG58557.1"/>
    <property type="molecule type" value="Genomic_DNA"/>
</dbReference>
<dbReference type="EMBL" id="BA000007">
    <property type="protein sequence ID" value="BAB37720.1"/>
    <property type="molecule type" value="Genomic_DNA"/>
</dbReference>
<dbReference type="PIR" id="A86012">
    <property type="entry name" value="A86012"/>
</dbReference>
<dbReference type="PIR" id="A91166">
    <property type="entry name" value="A91166"/>
</dbReference>
<dbReference type="RefSeq" id="NP_312324.1">
    <property type="nucleotide sequence ID" value="NC_002695.1"/>
</dbReference>
<dbReference type="RefSeq" id="WP_000572164.1">
    <property type="nucleotide sequence ID" value="NZ_VOAI01000004.1"/>
</dbReference>
<dbReference type="SMR" id="Q8X4P0"/>
<dbReference type="STRING" id="155864.Z4819"/>
<dbReference type="GeneID" id="915845"/>
<dbReference type="GeneID" id="93778540"/>
<dbReference type="KEGG" id="ece:Z4819"/>
<dbReference type="KEGG" id="ecs:ECs_4297"/>
<dbReference type="PATRIC" id="fig|386585.9.peg.4488"/>
<dbReference type="eggNOG" id="COG0395">
    <property type="taxonomic scope" value="Bacteria"/>
</dbReference>
<dbReference type="HOGENOM" id="CLU_016047_1_1_6"/>
<dbReference type="OMA" id="FIAWNDF"/>
<dbReference type="Proteomes" id="UP000000558">
    <property type="component" value="Chromosome"/>
</dbReference>
<dbReference type="Proteomes" id="UP000002519">
    <property type="component" value="Chromosome"/>
</dbReference>
<dbReference type="GO" id="GO:0005886">
    <property type="term" value="C:plasma membrane"/>
    <property type="evidence" value="ECO:0007669"/>
    <property type="project" value="UniProtKB-SubCell"/>
</dbReference>
<dbReference type="GO" id="GO:0055085">
    <property type="term" value="P:transmembrane transport"/>
    <property type="evidence" value="ECO:0007669"/>
    <property type="project" value="InterPro"/>
</dbReference>
<dbReference type="CDD" id="cd06261">
    <property type="entry name" value="TM_PBP2"/>
    <property type="match status" value="1"/>
</dbReference>
<dbReference type="FunFam" id="1.10.3720.10:FF:000042">
    <property type="entry name" value="sn-glycerol-3-phosphate transport system permease protein UgpE"/>
    <property type="match status" value="1"/>
</dbReference>
<dbReference type="Gene3D" id="1.10.3720.10">
    <property type="entry name" value="MetI-like"/>
    <property type="match status" value="1"/>
</dbReference>
<dbReference type="InterPro" id="IPR000515">
    <property type="entry name" value="MetI-like"/>
</dbReference>
<dbReference type="InterPro" id="IPR035906">
    <property type="entry name" value="MetI-like_sf"/>
</dbReference>
<dbReference type="NCBIfam" id="NF008210">
    <property type="entry name" value="PRK10973.1"/>
    <property type="match status" value="1"/>
</dbReference>
<dbReference type="PANTHER" id="PTHR43744">
    <property type="entry name" value="ABC TRANSPORTER PERMEASE PROTEIN MG189-RELATED-RELATED"/>
    <property type="match status" value="1"/>
</dbReference>
<dbReference type="PANTHER" id="PTHR43744:SF8">
    <property type="entry name" value="SN-GLYCEROL-3-PHOSPHATE TRANSPORT SYSTEM PERMEASE PROTEIN UGPE"/>
    <property type="match status" value="1"/>
</dbReference>
<dbReference type="Pfam" id="PF00528">
    <property type="entry name" value="BPD_transp_1"/>
    <property type="match status" value="1"/>
</dbReference>
<dbReference type="SUPFAM" id="SSF161098">
    <property type="entry name" value="MetI-like"/>
    <property type="match status" value="1"/>
</dbReference>
<dbReference type="PROSITE" id="PS50928">
    <property type="entry name" value="ABC_TM1"/>
    <property type="match status" value="1"/>
</dbReference>
<name>UGPE_ECO57</name>
<proteinExistence type="inferred from homology"/>
<sequence length="281" mass="31472">MIENRPWLTIFSHTMLILGIAVILFPLYVAFVAATLDKQAVYAAPMTLIPGTHLLENIHNIWVNGVGTNSAPFWRMLLNSFVMAFSITLGKITVSMLSAFAIVWFRFPLRNLFFWMIFITLMLPVEVRIFPTVEVIANLKMLDSYAGLTLPLMASATATFLFRQFFMTLPDELVEAARIDGASPMRFFCDIVFPLSKTNLAALFVITFIYGWNQYLWPLLIITDVDLGTTVAGIKGMIATGEGTTEWNSVMAAMLLTLIPPVVIVLVMQRAFVRGLVDSEK</sequence>